<comment type="function">
    <text evidence="1">One of the primary rRNA binding proteins, it binds directly to 16S rRNA central domain where it helps coordinate assembly of the platform of the 30S subunit.</text>
</comment>
<comment type="subunit">
    <text evidence="1">Part of the 30S ribosomal subunit. Contacts proteins S5 and S12.</text>
</comment>
<comment type="similarity">
    <text evidence="1">Belongs to the universal ribosomal protein uS8 family.</text>
</comment>
<protein>
    <recommendedName>
        <fullName evidence="1">Small ribosomal subunit protein uS8</fullName>
    </recommendedName>
    <alternativeName>
        <fullName evidence="2">30S ribosomal protein S8</fullName>
    </alternativeName>
</protein>
<proteinExistence type="inferred from homology"/>
<gene>
    <name evidence="1" type="primary">rpsH</name>
    <name evidence="1" type="synonym">rps8</name>
    <name type="ordered locus">AM1_4709</name>
</gene>
<keyword id="KW-1185">Reference proteome</keyword>
<keyword id="KW-0687">Ribonucleoprotein</keyword>
<keyword id="KW-0689">Ribosomal protein</keyword>
<keyword id="KW-0694">RNA-binding</keyword>
<keyword id="KW-0699">rRNA-binding</keyword>
<dbReference type="EMBL" id="CP000828">
    <property type="protein sequence ID" value="ABW29681.1"/>
    <property type="molecule type" value="Genomic_DNA"/>
</dbReference>
<dbReference type="RefSeq" id="WP_010469304.1">
    <property type="nucleotide sequence ID" value="NC_009925.1"/>
</dbReference>
<dbReference type="SMR" id="B0C1E6"/>
<dbReference type="STRING" id="329726.AM1_4709"/>
<dbReference type="KEGG" id="amr:AM1_4709"/>
<dbReference type="eggNOG" id="COG0096">
    <property type="taxonomic scope" value="Bacteria"/>
</dbReference>
<dbReference type="HOGENOM" id="CLU_098428_0_2_3"/>
<dbReference type="OrthoDB" id="9802617at2"/>
<dbReference type="Proteomes" id="UP000000268">
    <property type="component" value="Chromosome"/>
</dbReference>
<dbReference type="GO" id="GO:1990904">
    <property type="term" value="C:ribonucleoprotein complex"/>
    <property type="evidence" value="ECO:0007669"/>
    <property type="project" value="UniProtKB-KW"/>
</dbReference>
<dbReference type="GO" id="GO:0005840">
    <property type="term" value="C:ribosome"/>
    <property type="evidence" value="ECO:0007669"/>
    <property type="project" value="UniProtKB-KW"/>
</dbReference>
<dbReference type="GO" id="GO:0019843">
    <property type="term" value="F:rRNA binding"/>
    <property type="evidence" value="ECO:0007669"/>
    <property type="project" value="UniProtKB-UniRule"/>
</dbReference>
<dbReference type="GO" id="GO:0003735">
    <property type="term" value="F:structural constituent of ribosome"/>
    <property type="evidence" value="ECO:0007669"/>
    <property type="project" value="InterPro"/>
</dbReference>
<dbReference type="GO" id="GO:0006412">
    <property type="term" value="P:translation"/>
    <property type="evidence" value="ECO:0007669"/>
    <property type="project" value="UniProtKB-UniRule"/>
</dbReference>
<dbReference type="FunFam" id="3.30.1370.30:FF:000002">
    <property type="entry name" value="30S ribosomal protein S8"/>
    <property type="match status" value="1"/>
</dbReference>
<dbReference type="FunFam" id="3.30.1490.10:FF:000001">
    <property type="entry name" value="30S ribosomal protein S8"/>
    <property type="match status" value="1"/>
</dbReference>
<dbReference type="Gene3D" id="3.30.1370.30">
    <property type="match status" value="1"/>
</dbReference>
<dbReference type="Gene3D" id="3.30.1490.10">
    <property type="match status" value="1"/>
</dbReference>
<dbReference type="HAMAP" id="MF_01302_B">
    <property type="entry name" value="Ribosomal_uS8_B"/>
    <property type="match status" value="1"/>
</dbReference>
<dbReference type="InterPro" id="IPR000630">
    <property type="entry name" value="Ribosomal_uS8"/>
</dbReference>
<dbReference type="InterPro" id="IPR047863">
    <property type="entry name" value="Ribosomal_uS8_CS"/>
</dbReference>
<dbReference type="InterPro" id="IPR035987">
    <property type="entry name" value="Ribosomal_uS8_sf"/>
</dbReference>
<dbReference type="NCBIfam" id="NF001109">
    <property type="entry name" value="PRK00136.1"/>
    <property type="match status" value="1"/>
</dbReference>
<dbReference type="PANTHER" id="PTHR11758">
    <property type="entry name" value="40S RIBOSOMAL PROTEIN S15A"/>
    <property type="match status" value="1"/>
</dbReference>
<dbReference type="Pfam" id="PF00410">
    <property type="entry name" value="Ribosomal_S8"/>
    <property type="match status" value="1"/>
</dbReference>
<dbReference type="SUPFAM" id="SSF56047">
    <property type="entry name" value="Ribosomal protein S8"/>
    <property type="match status" value="1"/>
</dbReference>
<dbReference type="PROSITE" id="PS00053">
    <property type="entry name" value="RIBOSOMAL_S8"/>
    <property type="match status" value="1"/>
</dbReference>
<feature type="chain" id="PRO_1000085907" description="Small ribosomal subunit protein uS8">
    <location>
        <begin position="1"/>
        <end position="133"/>
    </location>
</feature>
<organism>
    <name type="scientific">Acaryochloris marina (strain MBIC 11017)</name>
    <dbReference type="NCBI Taxonomy" id="329726"/>
    <lineage>
        <taxon>Bacteria</taxon>
        <taxon>Bacillati</taxon>
        <taxon>Cyanobacteriota</taxon>
        <taxon>Cyanophyceae</taxon>
        <taxon>Acaryochloridales</taxon>
        <taxon>Acaryochloridaceae</taxon>
        <taxon>Acaryochloris</taxon>
    </lineage>
</organism>
<reference key="1">
    <citation type="journal article" date="2008" name="Proc. Natl. Acad. Sci. U.S.A.">
        <title>Niche adaptation and genome expansion in the chlorophyll d-producing cyanobacterium Acaryochloris marina.</title>
        <authorList>
            <person name="Swingley W.D."/>
            <person name="Chen M."/>
            <person name="Cheung P.C."/>
            <person name="Conrad A.L."/>
            <person name="Dejesa L.C."/>
            <person name="Hao J."/>
            <person name="Honchak B.M."/>
            <person name="Karbach L.E."/>
            <person name="Kurdoglu A."/>
            <person name="Lahiri S."/>
            <person name="Mastrian S.D."/>
            <person name="Miyashita H."/>
            <person name="Page L."/>
            <person name="Ramakrishna P."/>
            <person name="Satoh S."/>
            <person name="Sattley W.M."/>
            <person name="Shimada Y."/>
            <person name="Taylor H.L."/>
            <person name="Tomo T."/>
            <person name="Tsuchiya T."/>
            <person name="Wang Z.T."/>
            <person name="Raymond J."/>
            <person name="Mimuro M."/>
            <person name="Blankenship R.E."/>
            <person name="Touchman J.W."/>
        </authorList>
    </citation>
    <scope>NUCLEOTIDE SEQUENCE [LARGE SCALE GENOMIC DNA]</scope>
    <source>
        <strain>MBIC 11017</strain>
    </source>
</reference>
<accession>B0C1E6</accession>
<name>RS8_ACAM1</name>
<sequence length="133" mass="14782">MAANDTIGDMLTRIRNANLARHQTTQVMSTRMTRSVASVLKDEGFITSFEESGEGVERRLVITLKYRGKNRQPIINTLQRISKPGLRVYSNRRDLPRVLGGIGIAIISTSSGIMTDRDARQTGVGGEVLCYVW</sequence>
<evidence type="ECO:0000255" key="1">
    <source>
        <dbReference type="HAMAP-Rule" id="MF_01302"/>
    </source>
</evidence>
<evidence type="ECO:0000305" key="2"/>